<comment type="subcellular location">
    <subcellularLocation>
        <location evidence="3">Membrane</location>
        <topology evidence="3">Multi-pass membrane protein</topology>
    </subcellularLocation>
</comment>
<comment type="alternative products">
    <event type="alternative splicing"/>
    <isoform>
        <id>Q8N755-1</id>
        <name>1</name>
        <sequence type="displayed"/>
    </isoform>
    <isoform>
        <id>Q8N755-2</id>
        <name>2</name>
        <sequence type="described" ref="VSP_054623"/>
    </isoform>
</comment>
<accession>Q8N755</accession>
<accession>B2R8K1</accession>
<accession>B4DWA4</accession>
<sequence length="202" mass="22575">MEAALLGLCNWSTLGVCAALKLPQISAVLAARSARGLSLPSLLLELAGFLVFLRYQCYYGYPPLTYLEYPILIAQDVILLLCIFHFNGNVKQATPYIAVLVSSWFILALQKWIIDLAMNLCTFISAASKFAQLQCLWKTRDSGTVSALTWSLSSYTCATRIITTLMTTNDFTILLRFVIMLALNIWVTVTVLRYRKTAIKAE</sequence>
<reference key="1">
    <citation type="journal article" date="2004" name="Nat. Genet.">
        <title>Complete sequencing and characterization of 21,243 full-length human cDNAs.</title>
        <authorList>
            <person name="Ota T."/>
            <person name="Suzuki Y."/>
            <person name="Nishikawa T."/>
            <person name="Otsuki T."/>
            <person name="Sugiyama T."/>
            <person name="Irie R."/>
            <person name="Wakamatsu A."/>
            <person name="Hayashi K."/>
            <person name="Sato H."/>
            <person name="Nagai K."/>
            <person name="Kimura K."/>
            <person name="Makita H."/>
            <person name="Sekine M."/>
            <person name="Obayashi M."/>
            <person name="Nishi T."/>
            <person name="Shibahara T."/>
            <person name="Tanaka T."/>
            <person name="Ishii S."/>
            <person name="Yamamoto J."/>
            <person name="Saito K."/>
            <person name="Kawai Y."/>
            <person name="Isono Y."/>
            <person name="Nakamura Y."/>
            <person name="Nagahari K."/>
            <person name="Murakami K."/>
            <person name="Yasuda T."/>
            <person name="Iwayanagi T."/>
            <person name="Wagatsuma M."/>
            <person name="Shiratori A."/>
            <person name="Sudo H."/>
            <person name="Hosoiri T."/>
            <person name="Kaku Y."/>
            <person name="Kodaira H."/>
            <person name="Kondo H."/>
            <person name="Sugawara M."/>
            <person name="Takahashi M."/>
            <person name="Kanda K."/>
            <person name="Yokoi T."/>
            <person name="Furuya T."/>
            <person name="Kikkawa E."/>
            <person name="Omura Y."/>
            <person name="Abe K."/>
            <person name="Kamihara K."/>
            <person name="Katsuta N."/>
            <person name="Sato K."/>
            <person name="Tanikawa M."/>
            <person name="Yamazaki M."/>
            <person name="Ninomiya K."/>
            <person name="Ishibashi T."/>
            <person name="Yamashita H."/>
            <person name="Murakawa K."/>
            <person name="Fujimori K."/>
            <person name="Tanai H."/>
            <person name="Kimata M."/>
            <person name="Watanabe M."/>
            <person name="Hiraoka S."/>
            <person name="Chiba Y."/>
            <person name="Ishida S."/>
            <person name="Ono Y."/>
            <person name="Takiguchi S."/>
            <person name="Watanabe S."/>
            <person name="Yosida M."/>
            <person name="Hotuta T."/>
            <person name="Kusano J."/>
            <person name="Kanehori K."/>
            <person name="Takahashi-Fujii A."/>
            <person name="Hara H."/>
            <person name="Tanase T.-O."/>
            <person name="Nomura Y."/>
            <person name="Togiya S."/>
            <person name="Komai F."/>
            <person name="Hara R."/>
            <person name="Takeuchi K."/>
            <person name="Arita M."/>
            <person name="Imose N."/>
            <person name="Musashino K."/>
            <person name="Yuuki H."/>
            <person name="Oshima A."/>
            <person name="Sasaki N."/>
            <person name="Aotsuka S."/>
            <person name="Yoshikawa Y."/>
            <person name="Matsunawa H."/>
            <person name="Ichihara T."/>
            <person name="Shiohata N."/>
            <person name="Sano S."/>
            <person name="Moriya S."/>
            <person name="Momiyama H."/>
            <person name="Satoh N."/>
            <person name="Takami S."/>
            <person name="Terashima Y."/>
            <person name="Suzuki O."/>
            <person name="Nakagawa S."/>
            <person name="Senoh A."/>
            <person name="Mizoguchi H."/>
            <person name="Goto Y."/>
            <person name="Shimizu F."/>
            <person name="Wakebe H."/>
            <person name="Hishigaki H."/>
            <person name="Watanabe T."/>
            <person name="Sugiyama A."/>
            <person name="Takemoto M."/>
            <person name="Kawakami B."/>
            <person name="Yamazaki M."/>
            <person name="Watanabe K."/>
            <person name="Kumagai A."/>
            <person name="Itakura S."/>
            <person name="Fukuzumi Y."/>
            <person name="Fujimori Y."/>
            <person name="Komiyama M."/>
            <person name="Tashiro H."/>
            <person name="Tanigami A."/>
            <person name="Fujiwara T."/>
            <person name="Ono T."/>
            <person name="Yamada K."/>
            <person name="Fujii Y."/>
            <person name="Ozaki K."/>
            <person name="Hirao M."/>
            <person name="Ohmori Y."/>
            <person name="Kawabata A."/>
            <person name="Hikiji T."/>
            <person name="Kobatake N."/>
            <person name="Inagaki H."/>
            <person name="Ikema Y."/>
            <person name="Okamoto S."/>
            <person name="Okitani R."/>
            <person name="Kawakami T."/>
            <person name="Noguchi S."/>
            <person name="Itoh T."/>
            <person name="Shigeta K."/>
            <person name="Senba T."/>
            <person name="Matsumura K."/>
            <person name="Nakajima Y."/>
            <person name="Mizuno T."/>
            <person name="Morinaga M."/>
            <person name="Sasaki M."/>
            <person name="Togashi T."/>
            <person name="Oyama M."/>
            <person name="Hata H."/>
            <person name="Watanabe M."/>
            <person name="Komatsu T."/>
            <person name="Mizushima-Sugano J."/>
            <person name="Satoh T."/>
            <person name="Shirai Y."/>
            <person name="Takahashi Y."/>
            <person name="Nakagawa K."/>
            <person name="Okumura K."/>
            <person name="Nagase T."/>
            <person name="Nomura N."/>
            <person name="Kikuchi H."/>
            <person name="Masuho Y."/>
            <person name="Yamashita R."/>
            <person name="Nakai K."/>
            <person name="Yada T."/>
            <person name="Nakamura Y."/>
            <person name="Ohara O."/>
            <person name="Isogai T."/>
            <person name="Sugano S."/>
        </authorList>
    </citation>
    <scope>NUCLEOTIDE SEQUENCE [LARGE SCALE MRNA] (ISOFORMS 1 AND 2)</scope>
    <source>
        <tissue>Embryo</tissue>
        <tissue>Stomach</tissue>
        <tissue>Synovium</tissue>
    </source>
</reference>
<reference key="2">
    <citation type="journal article" date="2005" name="Nature">
        <title>Generation and annotation of the DNA sequences of human chromosomes 2 and 4.</title>
        <authorList>
            <person name="Hillier L.W."/>
            <person name="Graves T.A."/>
            <person name="Fulton R.S."/>
            <person name="Fulton L.A."/>
            <person name="Pepin K.H."/>
            <person name="Minx P."/>
            <person name="Wagner-McPherson C."/>
            <person name="Layman D."/>
            <person name="Wylie K."/>
            <person name="Sekhon M."/>
            <person name="Becker M.C."/>
            <person name="Fewell G.A."/>
            <person name="Delehaunty K.D."/>
            <person name="Miner T.L."/>
            <person name="Nash W.E."/>
            <person name="Kremitzki C."/>
            <person name="Oddy L."/>
            <person name="Du H."/>
            <person name="Sun H."/>
            <person name="Bradshaw-Cordum H."/>
            <person name="Ali J."/>
            <person name="Carter J."/>
            <person name="Cordes M."/>
            <person name="Harris A."/>
            <person name="Isak A."/>
            <person name="van Brunt A."/>
            <person name="Nguyen C."/>
            <person name="Du F."/>
            <person name="Courtney L."/>
            <person name="Kalicki J."/>
            <person name="Ozersky P."/>
            <person name="Abbott S."/>
            <person name="Armstrong J."/>
            <person name="Belter E.A."/>
            <person name="Caruso L."/>
            <person name="Cedroni M."/>
            <person name="Cotton M."/>
            <person name="Davidson T."/>
            <person name="Desai A."/>
            <person name="Elliott G."/>
            <person name="Erb T."/>
            <person name="Fronick C."/>
            <person name="Gaige T."/>
            <person name="Haakenson W."/>
            <person name="Haglund K."/>
            <person name="Holmes A."/>
            <person name="Harkins R."/>
            <person name="Kim K."/>
            <person name="Kruchowski S.S."/>
            <person name="Strong C.M."/>
            <person name="Grewal N."/>
            <person name="Goyea E."/>
            <person name="Hou S."/>
            <person name="Levy A."/>
            <person name="Martinka S."/>
            <person name="Mead K."/>
            <person name="McLellan M.D."/>
            <person name="Meyer R."/>
            <person name="Randall-Maher J."/>
            <person name="Tomlinson C."/>
            <person name="Dauphin-Kohlberg S."/>
            <person name="Kozlowicz-Reilly A."/>
            <person name="Shah N."/>
            <person name="Swearengen-Shahid S."/>
            <person name="Snider J."/>
            <person name="Strong J.T."/>
            <person name="Thompson J."/>
            <person name="Yoakum M."/>
            <person name="Leonard S."/>
            <person name="Pearman C."/>
            <person name="Trani L."/>
            <person name="Radionenko M."/>
            <person name="Waligorski J.E."/>
            <person name="Wang C."/>
            <person name="Rock S.M."/>
            <person name="Tin-Wollam A.-M."/>
            <person name="Maupin R."/>
            <person name="Latreille P."/>
            <person name="Wendl M.C."/>
            <person name="Yang S.-P."/>
            <person name="Pohl C."/>
            <person name="Wallis J.W."/>
            <person name="Spieth J."/>
            <person name="Bieri T.A."/>
            <person name="Berkowicz N."/>
            <person name="Nelson J.O."/>
            <person name="Osborne J."/>
            <person name="Ding L."/>
            <person name="Meyer R."/>
            <person name="Sabo A."/>
            <person name="Shotland Y."/>
            <person name="Sinha P."/>
            <person name="Wohldmann P.E."/>
            <person name="Cook L.L."/>
            <person name="Hickenbotham M.T."/>
            <person name="Eldred J."/>
            <person name="Williams D."/>
            <person name="Jones T.A."/>
            <person name="She X."/>
            <person name="Ciccarelli F.D."/>
            <person name="Izaurralde E."/>
            <person name="Taylor J."/>
            <person name="Schmutz J."/>
            <person name="Myers R.M."/>
            <person name="Cox D.R."/>
            <person name="Huang X."/>
            <person name="McPherson J.D."/>
            <person name="Mardis E.R."/>
            <person name="Clifton S.W."/>
            <person name="Warren W.C."/>
            <person name="Chinwalla A.T."/>
            <person name="Eddy S.R."/>
            <person name="Marra M.A."/>
            <person name="Ovcharenko I."/>
            <person name="Furey T.S."/>
            <person name="Miller W."/>
            <person name="Eichler E.E."/>
            <person name="Bork P."/>
            <person name="Suyama M."/>
            <person name="Torrents D."/>
            <person name="Waterston R.H."/>
            <person name="Wilson R.K."/>
        </authorList>
    </citation>
    <scope>NUCLEOTIDE SEQUENCE [LARGE SCALE GENOMIC DNA]</scope>
</reference>
<reference key="3">
    <citation type="submission" date="2005-09" db="EMBL/GenBank/DDBJ databases">
        <authorList>
            <person name="Mural R.J."/>
            <person name="Istrail S."/>
            <person name="Sutton G.G."/>
            <person name="Florea L."/>
            <person name="Halpern A.L."/>
            <person name="Mobarry C.M."/>
            <person name="Lippert R."/>
            <person name="Walenz B."/>
            <person name="Shatkay H."/>
            <person name="Dew I."/>
            <person name="Miller J.R."/>
            <person name="Flanigan M.J."/>
            <person name="Edwards N.J."/>
            <person name="Bolanos R."/>
            <person name="Fasulo D."/>
            <person name="Halldorsson B.V."/>
            <person name="Hannenhalli S."/>
            <person name="Turner R."/>
            <person name="Yooseph S."/>
            <person name="Lu F."/>
            <person name="Nusskern D.R."/>
            <person name="Shue B.C."/>
            <person name="Zheng X.H."/>
            <person name="Zhong F."/>
            <person name="Delcher A.L."/>
            <person name="Huson D.H."/>
            <person name="Kravitz S.A."/>
            <person name="Mouchard L."/>
            <person name="Reinert K."/>
            <person name="Remington K.A."/>
            <person name="Clark A.G."/>
            <person name="Waterman M.S."/>
            <person name="Eichler E.E."/>
            <person name="Adams M.D."/>
            <person name="Hunkapiller M.W."/>
            <person name="Myers E.W."/>
            <person name="Venter J.C."/>
        </authorList>
    </citation>
    <scope>NUCLEOTIDE SEQUENCE [LARGE SCALE GENOMIC DNA]</scope>
</reference>
<reference key="4">
    <citation type="journal article" date="2004" name="Genome Res.">
        <title>The status, quality, and expansion of the NIH full-length cDNA project: the Mammalian Gene Collection (MGC).</title>
        <authorList>
            <consortium name="The MGC Project Team"/>
        </authorList>
    </citation>
    <scope>NUCLEOTIDE SEQUENCE [LARGE SCALE MRNA] (ISOFORM 1)</scope>
    <source>
        <tissue>Testis</tissue>
    </source>
</reference>
<protein>
    <recommendedName>
        <fullName evidence="3">Solute carrier family 66 member 3</fullName>
    </recommendedName>
    <alternativeName>
        <fullName evidence="3">PQ-loop repeat-containing protein 3</fullName>
    </alternativeName>
</protein>
<keyword id="KW-0025">Alternative splicing</keyword>
<keyword id="KW-0472">Membrane</keyword>
<keyword id="KW-1267">Proteomics identification</keyword>
<keyword id="KW-1185">Reference proteome</keyword>
<keyword id="KW-0732">Signal</keyword>
<keyword id="KW-0812">Transmembrane</keyword>
<keyword id="KW-1133">Transmembrane helix</keyword>
<feature type="signal peptide" evidence="1">
    <location>
        <begin position="1"/>
        <end position="19"/>
    </location>
</feature>
<feature type="chain" id="PRO_0000232512" description="Solute carrier family 66 member 3">
    <location>
        <begin position="20"/>
        <end position="202"/>
    </location>
</feature>
<feature type="transmembrane region" description="Helical" evidence="1">
    <location>
        <begin position="33"/>
        <end position="53"/>
    </location>
</feature>
<feature type="transmembrane region" description="Helical" evidence="1">
    <location>
        <begin position="64"/>
        <end position="84"/>
    </location>
</feature>
<feature type="transmembrane region" description="Helical" evidence="1">
    <location>
        <begin position="97"/>
        <end position="117"/>
    </location>
</feature>
<feature type="transmembrane region" description="Helical" evidence="1">
    <location>
        <begin position="171"/>
        <end position="191"/>
    </location>
</feature>
<feature type="splice variant" id="VSP_054623" description="In isoform 2." evidence="2">
    <location>
        <begin position="159"/>
        <end position="172"/>
    </location>
</feature>
<evidence type="ECO:0000255" key="1"/>
<evidence type="ECO:0000303" key="2">
    <source>
    </source>
</evidence>
<evidence type="ECO:0000305" key="3"/>
<evidence type="ECO:0000312" key="4">
    <source>
        <dbReference type="HGNC" id="HGNC:28503"/>
    </source>
</evidence>
<gene>
    <name evidence="4" type="primary">SLC66A3</name>
    <name type="synonym">C2orf22</name>
    <name evidence="4" type="synonym">PQLC3</name>
</gene>
<organism>
    <name type="scientific">Homo sapiens</name>
    <name type="common">Human</name>
    <dbReference type="NCBI Taxonomy" id="9606"/>
    <lineage>
        <taxon>Eukaryota</taxon>
        <taxon>Metazoa</taxon>
        <taxon>Chordata</taxon>
        <taxon>Craniata</taxon>
        <taxon>Vertebrata</taxon>
        <taxon>Euteleostomi</taxon>
        <taxon>Mammalia</taxon>
        <taxon>Eutheria</taxon>
        <taxon>Euarchontoglires</taxon>
        <taxon>Primates</taxon>
        <taxon>Haplorrhini</taxon>
        <taxon>Catarrhini</taxon>
        <taxon>Hominidae</taxon>
        <taxon>Homo</taxon>
    </lineage>
</organism>
<name>S66A3_HUMAN</name>
<proteinExistence type="evidence at protein level"/>
<dbReference type="EMBL" id="AK001091">
    <property type="protein sequence ID" value="BAE46613.1"/>
    <property type="molecule type" value="mRNA"/>
</dbReference>
<dbReference type="EMBL" id="AK301439">
    <property type="protein sequence ID" value="BAG62966.1"/>
    <property type="molecule type" value="mRNA"/>
</dbReference>
<dbReference type="EMBL" id="AK313402">
    <property type="protein sequence ID" value="BAG36198.1"/>
    <property type="molecule type" value="mRNA"/>
</dbReference>
<dbReference type="EMBL" id="AC018463">
    <property type="protein sequence ID" value="AAX93048.1"/>
    <property type="molecule type" value="Genomic_DNA"/>
</dbReference>
<dbReference type="EMBL" id="CH471053">
    <property type="protein sequence ID" value="EAX00939.1"/>
    <property type="molecule type" value="Genomic_DNA"/>
</dbReference>
<dbReference type="EMBL" id="CH471053">
    <property type="protein sequence ID" value="EAX00942.1"/>
    <property type="molecule type" value="Genomic_DNA"/>
</dbReference>
<dbReference type="EMBL" id="BC027625">
    <property type="protein sequence ID" value="AAH27625.1"/>
    <property type="molecule type" value="mRNA"/>
</dbReference>
<dbReference type="CCDS" id="CCDS1679.1">
    <molecule id="Q8N755-1"/>
</dbReference>
<dbReference type="CCDS" id="CCDS62856.1">
    <molecule id="Q8N755-2"/>
</dbReference>
<dbReference type="RefSeq" id="NP_001269639.1">
    <molecule id="Q8N755-2"/>
    <property type="nucleotide sequence ID" value="NM_001282710.2"/>
</dbReference>
<dbReference type="RefSeq" id="NP_001269640.1">
    <property type="nucleotide sequence ID" value="NM_001282711.1"/>
</dbReference>
<dbReference type="RefSeq" id="NP_001269641.1">
    <property type="nucleotide sequence ID" value="NM_001282712.1"/>
</dbReference>
<dbReference type="RefSeq" id="NP_689604.1">
    <molecule id="Q8N755-1"/>
    <property type="nucleotide sequence ID" value="NM_152391.5"/>
</dbReference>
<dbReference type="SMR" id="Q8N755"/>
<dbReference type="BioGRID" id="126257">
    <property type="interactions" value="2"/>
</dbReference>
<dbReference type="FunCoup" id="Q8N755">
    <property type="interactions" value="241"/>
</dbReference>
<dbReference type="IntAct" id="Q8N755">
    <property type="interactions" value="1"/>
</dbReference>
<dbReference type="MINT" id="Q8N755"/>
<dbReference type="STRING" id="9606.ENSP00000295083"/>
<dbReference type="BioMuta" id="PQLC3"/>
<dbReference type="DMDM" id="74729214"/>
<dbReference type="jPOST" id="Q8N755"/>
<dbReference type="MassIVE" id="Q8N755"/>
<dbReference type="PaxDb" id="9606-ENSP00000295083"/>
<dbReference type="PeptideAtlas" id="Q8N755"/>
<dbReference type="ProteomicsDB" id="5327"/>
<dbReference type="ProteomicsDB" id="72265">
    <molecule id="Q8N755-1"/>
</dbReference>
<dbReference type="Pumba" id="Q8N755"/>
<dbReference type="Antibodypedia" id="74460">
    <property type="antibodies" value="27 antibodies from 6 providers"/>
</dbReference>
<dbReference type="DNASU" id="130814"/>
<dbReference type="Ensembl" id="ENST00000295083.8">
    <molecule id="Q8N755-1"/>
    <property type="protein sequence ID" value="ENSP00000295083.3"/>
    <property type="gene ID" value="ENSG00000162976.13"/>
</dbReference>
<dbReference type="Ensembl" id="ENST00000441908.6">
    <molecule id="Q8N755-2"/>
    <property type="protein sequence ID" value="ENSP00000406148.2"/>
    <property type="gene ID" value="ENSG00000162976.13"/>
</dbReference>
<dbReference type="GeneID" id="130814"/>
<dbReference type="KEGG" id="hsa:130814"/>
<dbReference type="MANE-Select" id="ENST00000295083.8">
    <property type="protein sequence ID" value="ENSP00000295083.3"/>
    <property type="RefSeq nucleotide sequence ID" value="NM_152391.5"/>
    <property type="RefSeq protein sequence ID" value="NP_689604.1"/>
</dbReference>
<dbReference type="UCSC" id="uc002rbc.5">
    <molecule id="Q8N755-1"/>
    <property type="organism name" value="human"/>
</dbReference>
<dbReference type="AGR" id="HGNC:28503"/>
<dbReference type="CTD" id="130814"/>
<dbReference type="DisGeNET" id="130814"/>
<dbReference type="GeneCards" id="SLC66A3"/>
<dbReference type="HGNC" id="HGNC:28503">
    <property type="gene designation" value="SLC66A3"/>
</dbReference>
<dbReference type="HPA" id="ENSG00000162976">
    <property type="expression patterns" value="Low tissue specificity"/>
</dbReference>
<dbReference type="neXtProt" id="NX_Q8N755"/>
<dbReference type="OpenTargets" id="ENSG00000162976"/>
<dbReference type="PharmGKB" id="PA134941925"/>
<dbReference type="VEuPathDB" id="HostDB:ENSG00000162976"/>
<dbReference type="eggNOG" id="KOG3211">
    <property type="taxonomic scope" value="Eukaryota"/>
</dbReference>
<dbReference type="GeneTree" id="ENSGT00940000153916"/>
<dbReference type="HOGENOM" id="CLU_053568_3_2_1"/>
<dbReference type="InParanoid" id="Q8N755"/>
<dbReference type="OMA" id="YALIYYA"/>
<dbReference type="OrthoDB" id="271506at2759"/>
<dbReference type="PAN-GO" id="Q8N755">
    <property type="GO annotations" value="0 GO annotations based on evolutionary models"/>
</dbReference>
<dbReference type="PhylomeDB" id="Q8N755"/>
<dbReference type="TreeFam" id="TF324895"/>
<dbReference type="PathwayCommons" id="Q8N755"/>
<dbReference type="SignaLink" id="Q8N755"/>
<dbReference type="BioGRID-ORCS" id="130814">
    <property type="hits" value="16 hits in 1148 CRISPR screens"/>
</dbReference>
<dbReference type="ChiTaRS" id="PQLC3">
    <property type="organism name" value="human"/>
</dbReference>
<dbReference type="GenomeRNAi" id="130814"/>
<dbReference type="Pharos" id="Q8N755">
    <property type="development level" value="Tdark"/>
</dbReference>
<dbReference type="PRO" id="PR:Q8N755"/>
<dbReference type="Proteomes" id="UP000005640">
    <property type="component" value="Chromosome 2"/>
</dbReference>
<dbReference type="RNAct" id="Q8N755">
    <property type="molecule type" value="protein"/>
</dbReference>
<dbReference type="Bgee" id="ENSG00000162976">
    <property type="expression patterns" value="Expressed in oocyte and 172 other cell types or tissues"/>
</dbReference>
<dbReference type="ExpressionAtlas" id="Q8N755">
    <property type="expression patterns" value="baseline and differential"/>
</dbReference>
<dbReference type="GO" id="GO:0016020">
    <property type="term" value="C:membrane"/>
    <property type="evidence" value="ECO:0007669"/>
    <property type="project" value="UniProtKB-SubCell"/>
</dbReference>
<dbReference type="Gene3D" id="1.20.1280.290">
    <property type="match status" value="2"/>
</dbReference>
<dbReference type="InterPro" id="IPR016817">
    <property type="entry name" value="MannP-dilichol_defect-1"/>
</dbReference>
<dbReference type="InterPro" id="IPR006603">
    <property type="entry name" value="PQ-loop_rpt"/>
</dbReference>
<dbReference type="PANTHER" id="PTHR12226">
    <property type="entry name" value="MANNOSE-P-DOLICHOL UTILIZATION DEFECT 1 LEC35 -RELATED"/>
    <property type="match status" value="1"/>
</dbReference>
<dbReference type="PANTHER" id="PTHR12226:SF3">
    <property type="entry name" value="SOLUTE CARRIER FAMILY 66 MEMBER 3"/>
    <property type="match status" value="1"/>
</dbReference>
<dbReference type="Pfam" id="PF04193">
    <property type="entry name" value="PQ-loop"/>
    <property type="match status" value="1"/>
</dbReference>
<dbReference type="PIRSF" id="PIRSF023381">
    <property type="entry name" value="MannP-dilichol_defect-1p"/>
    <property type="match status" value="1"/>
</dbReference>